<sequence>MAEAFKFELVSPERLLVSEQVESVVIPGAEGEMTVMAHHAPVMTTIKPGVVTVKTASGGEERYVVFGGFADIVPAGCTLLAESAVAVKDVDRADLARRIQEAKEDAADAKDDQARSKAEQFLSQLTTLEGAILPA</sequence>
<comment type="function">
    <text evidence="1">Produces ATP from ADP in the presence of a proton gradient across the membrane.</text>
</comment>
<comment type="subunit">
    <text>F-type ATPases have 2 components, CF(1) - the catalytic core - and CF(0) - the membrane proton channel. CF(1) has five subunits: alpha(3), beta(3), gamma(1), delta(1), epsilon(1). CF(0) has three main subunits: a, b and c.</text>
</comment>
<comment type="subcellular location">
    <subcellularLocation>
        <location evidence="1">Cell inner membrane</location>
        <topology evidence="1">Peripheral membrane protein</topology>
    </subcellularLocation>
</comment>
<comment type="similarity">
    <text evidence="1">Belongs to the ATPase epsilon chain family.</text>
</comment>
<accession>Q98EV9</accession>
<organism>
    <name type="scientific">Mesorhizobium japonicum (strain LMG 29417 / CECT 9101 / MAFF 303099)</name>
    <name type="common">Mesorhizobium loti (strain MAFF 303099)</name>
    <dbReference type="NCBI Taxonomy" id="266835"/>
    <lineage>
        <taxon>Bacteria</taxon>
        <taxon>Pseudomonadati</taxon>
        <taxon>Pseudomonadota</taxon>
        <taxon>Alphaproteobacteria</taxon>
        <taxon>Hyphomicrobiales</taxon>
        <taxon>Phyllobacteriaceae</taxon>
        <taxon>Mesorhizobium</taxon>
    </lineage>
</organism>
<proteinExistence type="inferred from homology"/>
<keyword id="KW-0066">ATP synthesis</keyword>
<keyword id="KW-0997">Cell inner membrane</keyword>
<keyword id="KW-1003">Cell membrane</keyword>
<keyword id="KW-0139">CF(1)</keyword>
<keyword id="KW-0375">Hydrogen ion transport</keyword>
<keyword id="KW-0406">Ion transport</keyword>
<keyword id="KW-0472">Membrane</keyword>
<keyword id="KW-0813">Transport</keyword>
<gene>
    <name evidence="1" type="primary">atpC</name>
    <name type="ordered locus">mll4059</name>
</gene>
<name>ATPE_RHILO</name>
<protein>
    <recommendedName>
        <fullName evidence="1">ATP synthase epsilon chain</fullName>
    </recommendedName>
    <alternativeName>
        <fullName evidence="1">ATP synthase F1 sector epsilon subunit</fullName>
    </alternativeName>
    <alternativeName>
        <fullName evidence="1">F-ATPase epsilon subunit</fullName>
    </alternativeName>
</protein>
<reference key="1">
    <citation type="journal article" date="2000" name="DNA Res.">
        <title>Complete genome structure of the nitrogen-fixing symbiotic bacterium Mesorhizobium loti.</title>
        <authorList>
            <person name="Kaneko T."/>
            <person name="Nakamura Y."/>
            <person name="Sato S."/>
            <person name="Asamizu E."/>
            <person name="Kato T."/>
            <person name="Sasamoto S."/>
            <person name="Watanabe A."/>
            <person name="Idesawa K."/>
            <person name="Ishikawa A."/>
            <person name="Kawashima K."/>
            <person name="Kimura T."/>
            <person name="Kishida Y."/>
            <person name="Kiyokawa C."/>
            <person name="Kohara M."/>
            <person name="Matsumoto M."/>
            <person name="Matsuno A."/>
            <person name="Mochizuki Y."/>
            <person name="Nakayama S."/>
            <person name="Nakazaki N."/>
            <person name="Shimpo S."/>
            <person name="Sugimoto M."/>
            <person name="Takeuchi C."/>
            <person name="Yamada M."/>
            <person name="Tabata S."/>
        </authorList>
    </citation>
    <scope>NUCLEOTIDE SEQUENCE [LARGE SCALE GENOMIC DNA]</scope>
    <source>
        <strain>LMG 29417 / CECT 9101 / MAFF 303099</strain>
    </source>
</reference>
<dbReference type="EMBL" id="BA000012">
    <property type="protein sequence ID" value="BAB50808.1"/>
    <property type="molecule type" value="Genomic_DNA"/>
</dbReference>
<dbReference type="RefSeq" id="WP_010912151.1">
    <property type="nucleotide sequence ID" value="NC_002678.2"/>
</dbReference>
<dbReference type="SMR" id="Q98EV9"/>
<dbReference type="KEGG" id="mlo:mll4059"/>
<dbReference type="eggNOG" id="COG0355">
    <property type="taxonomic scope" value="Bacteria"/>
</dbReference>
<dbReference type="HOGENOM" id="CLU_084338_2_1_5"/>
<dbReference type="Proteomes" id="UP000000552">
    <property type="component" value="Chromosome"/>
</dbReference>
<dbReference type="GO" id="GO:0005886">
    <property type="term" value="C:plasma membrane"/>
    <property type="evidence" value="ECO:0007669"/>
    <property type="project" value="UniProtKB-SubCell"/>
</dbReference>
<dbReference type="GO" id="GO:0045259">
    <property type="term" value="C:proton-transporting ATP synthase complex"/>
    <property type="evidence" value="ECO:0007669"/>
    <property type="project" value="UniProtKB-KW"/>
</dbReference>
<dbReference type="GO" id="GO:0005524">
    <property type="term" value="F:ATP binding"/>
    <property type="evidence" value="ECO:0007669"/>
    <property type="project" value="UniProtKB-UniRule"/>
</dbReference>
<dbReference type="GO" id="GO:0046933">
    <property type="term" value="F:proton-transporting ATP synthase activity, rotational mechanism"/>
    <property type="evidence" value="ECO:0007669"/>
    <property type="project" value="UniProtKB-UniRule"/>
</dbReference>
<dbReference type="CDD" id="cd12152">
    <property type="entry name" value="F1-ATPase_delta"/>
    <property type="match status" value="1"/>
</dbReference>
<dbReference type="Gene3D" id="2.60.15.10">
    <property type="entry name" value="F0F1 ATP synthase delta/epsilon subunit, N-terminal"/>
    <property type="match status" value="1"/>
</dbReference>
<dbReference type="HAMAP" id="MF_00530">
    <property type="entry name" value="ATP_synth_epsil_bac"/>
    <property type="match status" value="1"/>
</dbReference>
<dbReference type="InterPro" id="IPR001469">
    <property type="entry name" value="ATP_synth_F1_dsu/esu"/>
</dbReference>
<dbReference type="InterPro" id="IPR020546">
    <property type="entry name" value="ATP_synth_F1_dsu/esu_N"/>
</dbReference>
<dbReference type="InterPro" id="IPR036771">
    <property type="entry name" value="ATPsynth_dsu/esu_N"/>
</dbReference>
<dbReference type="NCBIfam" id="TIGR01216">
    <property type="entry name" value="ATP_synt_epsi"/>
    <property type="match status" value="1"/>
</dbReference>
<dbReference type="NCBIfam" id="NF001851">
    <property type="entry name" value="PRK00571.2-4"/>
    <property type="match status" value="1"/>
</dbReference>
<dbReference type="PANTHER" id="PTHR13822">
    <property type="entry name" value="ATP SYNTHASE DELTA/EPSILON CHAIN"/>
    <property type="match status" value="1"/>
</dbReference>
<dbReference type="PANTHER" id="PTHR13822:SF10">
    <property type="entry name" value="ATP SYNTHASE EPSILON CHAIN, CHLOROPLASTIC"/>
    <property type="match status" value="1"/>
</dbReference>
<dbReference type="Pfam" id="PF02823">
    <property type="entry name" value="ATP-synt_DE_N"/>
    <property type="match status" value="1"/>
</dbReference>
<dbReference type="SUPFAM" id="SSF51344">
    <property type="entry name" value="Epsilon subunit of F1F0-ATP synthase N-terminal domain"/>
    <property type="match status" value="1"/>
</dbReference>
<evidence type="ECO:0000255" key="1">
    <source>
        <dbReference type="HAMAP-Rule" id="MF_00530"/>
    </source>
</evidence>
<feature type="chain" id="PRO_0000188185" description="ATP synthase epsilon chain">
    <location>
        <begin position="1"/>
        <end position="135"/>
    </location>
</feature>